<gene>
    <name evidence="1" type="primary">gatC</name>
    <name type="ordered locus">Ldb0468</name>
</gene>
<evidence type="ECO:0000255" key="1">
    <source>
        <dbReference type="HAMAP-Rule" id="MF_00122"/>
    </source>
</evidence>
<organism>
    <name type="scientific">Lactobacillus delbrueckii subsp. bulgaricus (strain ATCC 11842 / DSM 20081 / BCRC 10696 / JCM 1002 / NBRC 13953 / NCIMB 11778 / NCTC 12712 / WDCM 00102 / Lb 14)</name>
    <dbReference type="NCBI Taxonomy" id="390333"/>
    <lineage>
        <taxon>Bacteria</taxon>
        <taxon>Bacillati</taxon>
        <taxon>Bacillota</taxon>
        <taxon>Bacilli</taxon>
        <taxon>Lactobacillales</taxon>
        <taxon>Lactobacillaceae</taxon>
        <taxon>Lactobacillus</taxon>
    </lineage>
</organism>
<protein>
    <recommendedName>
        <fullName evidence="1">Aspartyl/glutamyl-tRNA(Asn/Gln) amidotransferase subunit C</fullName>
        <shortName evidence="1">Asp/Glu-ADT subunit C</shortName>
        <ecNumber evidence="1">6.3.5.-</ecNumber>
    </recommendedName>
</protein>
<sequence>MEKVTNDTIKHVAALAQLEFSEEELAKFTPQMGKILEMAEELQAVDTTGVEETVQVVDRDTVFREDVPEKWQTREEMMKNVPDKSNGFVKVPVIIDKDDNQ</sequence>
<proteinExistence type="inferred from homology"/>
<accession>Q1GBF5</accession>
<feature type="chain" id="PRO_1000057803" description="Aspartyl/glutamyl-tRNA(Asn/Gln) amidotransferase subunit C">
    <location>
        <begin position="1"/>
        <end position="101"/>
    </location>
</feature>
<name>GATC_LACDA</name>
<comment type="function">
    <text evidence="1">Allows the formation of correctly charged Asn-tRNA(Asn) or Gln-tRNA(Gln) through the transamidation of misacylated Asp-tRNA(Asn) or Glu-tRNA(Gln) in organisms which lack either or both of asparaginyl-tRNA or glutaminyl-tRNA synthetases. The reaction takes place in the presence of glutamine and ATP through an activated phospho-Asp-tRNA(Asn) or phospho-Glu-tRNA(Gln).</text>
</comment>
<comment type="catalytic activity">
    <reaction evidence="1">
        <text>L-glutamyl-tRNA(Gln) + L-glutamine + ATP + H2O = L-glutaminyl-tRNA(Gln) + L-glutamate + ADP + phosphate + H(+)</text>
        <dbReference type="Rhea" id="RHEA:17521"/>
        <dbReference type="Rhea" id="RHEA-COMP:9681"/>
        <dbReference type="Rhea" id="RHEA-COMP:9684"/>
        <dbReference type="ChEBI" id="CHEBI:15377"/>
        <dbReference type="ChEBI" id="CHEBI:15378"/>
        <dbReference type="ChEBI" id="CHEBI:29985"/>
        <dbReference type="ChEBI" id="CHEBI:30616"/>
        <dbReference type="ChEBI" id="CHEBI:43474"/>
        <dbReference type="ChEBI" id="CHEBI:58359"/>
        <dbReference type="ChEBI" id="CHEBI:78520"/>
        <dbReference type="ChEBI" id="CHEBI:78521"/>
        <dbReference type="ChEBI" id="CHEBI:456216"/>
    </reaction>
</comment>
<comment type="catalytic activity">
    <reaction evidence="1">
        <text>L-aspartyl-tRNA(Asn) + L-glutamine + ATP + H2O = L-asparaginyl-tRNA(Asn) + L-glutamate + ADP + phosphate + 2 H(+)</text>
        <dbReference type="Rhea" id="RHEA:14513"/>
        <dbReference type="Rhea" id="RHEA-COMP:9674"/>
        <dbReference type="Rhea" id="RHEA-COMP:9677"/>
        <dbReference type="ChEBI" id="CHEBI:15377"/>
        <dbReference type="ChEBI" id="CHEBI:15378"/>
        <dbReference type="ChEBI" id="CHEBI:29985"/>
        <dbReference type="ChEBI" id="CHEBI:30616"/>
        <dbReference type="ChEBI" id="CHEBI:43474"/>
        <dbReference type="ChEBI" id="CHEBI:58359"/>
        <dbReference type="ChEBI" id="CHEBI:78515"/>
        <dbReference type="ChEBI" id="CHEBI:78516"/>
        <dbReference type="ChEBI" id="CHEBI:456216"/>
    </reaction>
</comment>
<comment type="subunit">
    <text evidence="1">Heterotrimer of A, B and C subunits.</text>
</comment>
<comment type="similarity">
    <text evidence="1">Belongs to the GatC family.</text>
</comment>
<reference key="1">
    <citation type="journal article" date="2006" name="Proc. Natl. Acad. Sci. U.S.A.">
        <title>The complete genome sequence of Lactobacillus bulgaricus reveals extensive and ongoing reductive evolution.</title>
        <authorList>
            <person name="van de Guchte M."/>
            <person name="Penaud S."/>
            <person name="Grimaldi C."/>
            <person name="Barbe V."/>
            <person name="Bryson K."/>
            <person name="Nicolas P."/>
            <person name="Robert C."/>
            <person name="Oztas S."/>
            <person name="Mangenot S."/>
            <person name="Couloux A."/>
            <person name="Loux V."/>
            <person name="Dervyn R."/>
            <person name="Bossy R."/>
            <person name="Bolotin A."/>
            <person name="Batto J.-M."/>
            <person name="Walunas T."/>
            <person name="Gibrat J.-F."/>
            <person name="Bessieres P."/>
            <person name="Weissenbach J."/>
            <person name="Ehrlich S.D."/>
            <person name="Maguin E."/>
        </authorList>
    </citation>
    <scope>NUCLEOTIDE SEQUENCE [LARGE SCALE GENOMIC DNA]</scope>
    <source>
        <strain>ATCC 11842 / DSM 20081 / BCRC 10696 / JCM 1002 / NBRC 13953 / NCIMB 11778 / NCTC 12712 / WDCM 00102 / Lb 14</strain>
    </source>
</reference>
<dbReference type="EC" id="6.3.5.-" evidence="1"/>
<dbReference type="EMBL" id="CR954253">
    <property type="protein sequence ID" value="CAI97299.1"/>
    <property type="molecule type" value="Genomic_DNA"/>
</dbReference>
<dbReference type="RefSeq" id="WP_003620937.1">
    <property type="nucleotide sequence ID" value="NZ_JQAV01000001.1"/>
</dbReference>
<dbReference type="SMR" id="Q1GBF5"/>
<dbReference type="STRING" id="390333.Ldb0468"/>
<dbReference type="KEGG" id="ldb:Ldb0468"/>
<dbReference type="PATRIC" id="fig|390333.13.peg.327"/>
<dbReference type="eggNOG" id="COG0721">
    <property type="taxonomic scope" value="Bacteria"/>
</dbReference>
<dbReference type="HOGENOM" id="CLU_105899_1_2_9"/>
<dbReference type="BioCyc" id="LDEL390333:LDB_RS01995-MONOMER"/>
<dbReference type="Proteomes" id="UP000001259">
    <property type="component" value="Chromosome"/>
</dbReference>
<dbReference type="GO" id="GO:0050566">
    <property type="term" value="F:asparaginyl-tRNA synthase (glutamine-hydrolyzing) activity"/>
    <property type="evidence" value="ECO:0007669"/>
    <property type="project" value="RHEA"/>
</dbReference>
<dbReference type="GO" id="GO:0005524">
    <property type="term" value="F:ATP binding"/>
    <property type="evidence" value="ECO:0007669"/>
    <property type="project" value="UniProtKB-KW"/>
</dbReference>
<dbReference type="GO" id="GO:0050567">
    <property type="term" value="F:glutaminyl-tRNA synthase (glutamine-hydrolyzing) activity"/>
    <property type="evidence" value="ECO:0007669"/>
    <property type="project" value="UniProtKB-UniRule"/>
</dbReference>
<dbReference type="GO" id="GO:0070681">
    <property type="term" value="P:glutaminyl-tRNAGln biosynthesis via transamidation"/>
    <property type="evidence" value="ECO:0007669"/>
    <property type="project" value="TreeGrafter"/>
</dbReference>
<dbReference type="GO" id="GO:0006450">
    <property type="term" value="P:regulation of translational fidelity"/>
    <property type="evidence" value="ECO:0007669"/>
    <property type="project" value="InterPro"/>
</dbReference>
<dbReference type="GO" id="GO:0006412">
    <property type="term" value="P:translation"/>
    <property type="evidence" value="ECO:0007669"/>
    <property type="project" value="UniProtKB-UniRule"/>
</dbReference>
<dbReference type="Gene3D" id="1.10.20.60">
    <property type="entry name" value="Glu-tRNAGln amidotransferase C subunit, N-terminal domain"/>
    <property type="match status" value="1"/>
</dbReference>
<dbReference type="HAMAP" id="MF_00122">
    <property type="entry name" value="GatC"/>
    <property type="match status" value="1"/>
</dbReference>
<dbReference type="InterPro" id="IPR036113">
    <property type="entry name" value="Asp/Glu-ADT_sf_sub_c"/>
</dbReference>
<dbReference type="InterPro" id="IPR003837">
    <property type="entry name" value="GatC"/>
</dbReference>
<dbReference type="NCBIfam" id="TIGR00135">
    <property type="entry name" value="gatC"/>
    <property type="match status" value="1"/>
</dbReference>
<dbReference type="PANTHER" id="PTHR15004">
    <property type="entry name" value="GLUTAMYL-TRNA(GLN) AMIDOTRANSFERASE SUBUNIT C, MITOCHONDRIAL"/>
    <property type="match status" value="1"/>
</dbReference>
<dbReference type="PANTHER" id="PTHR15004:SF0">
    <property type="entry name" value="GLUTAMYL-TRNA(GLN) AMIDOTRANSFERASE SUBUNIT C, MITOCHONDRIAL"/>
    <property type="match status" value="1"/>
</dbReference>
<dbReference type="Pfam" id="PF02686">
    <property type="entry name" value="GatC"/>
    <property type="match status" value="1"/>
</dbReference>
<dbReference type="SUPFAM" id="SSF141000">
    <property type="entry name" value="Glu-tRNAGln amidotransferase C subunit"/>
    <property type="match status" value="1"/>
</dbReference>
<keyword id="KW-0067">ATP-binding</keyword>
<keyword id="KW-0436">Ligase</keyword>
<keyword id="KW-0547">Nucleotide-binding</keyword>
<keyword id="KW-0648">Protein biosynthesis</keyword>
<keyword id="KW-1185">Reference proteome</keyword>